<sequence>MSNSITLEERGESFQPRPITSFVRREGRMTPAQKKALEHLWPRYGIDLGTGPLNLAAIFNRQAERILEIGFGNGESLLQQARAAPERDFLGIEVYRPGIGHLLLRLKAEGLENIRVIHGDAWEVLQRALPNPSLDGVQIFFPDPWPKKRHHKRRLIQPSFVDLLERKIKPGGWFHLATDWQDYAEQIKAVLSQHAGFNQLTNEGQSTQRPRTKFEARGQQQGHGVWDLRFKRSVDS</sequence>
<gene>
    <name evidence="2" type="primary">trmB</name>
    <name type="ordered locus">Noc_1026</name>
</gene>
<reference key="1">
    <citation type="journal article" date="2006" name="Appl. Environ. Microbiol.">
        <title>Complete genome sequence of the marine, chemolithoautotrophic, ammonia-oxidizing bacterium Nitrosococcus oceani ATCC 19707.</title>
        <authorList>
            <person name="Klotz M.G."/>
            <person name="Arp D.J."/>
            <person name="Chain P.S.G."/>
            <person name="El-Sheikh A.F."/>
            <person name="Hauser L.J."/>
            <person name="Hommes N.G."/>
            <person name="Larimer F.W."/>
            <person name="Malfatti S.A."/>
            <person name="Norton J.M."/>
            <person name="Poret-Peterson A.T."/>
            <person name="Vergez L.M."/>
            <person name="Ward B.B."/>
        </authorList>
    </citation>
    <scope>NUCLEOTIDE SEQUENCE [LARGE SCALE GENOMIC DNA]</scope>
    <source>
        <strain>ATCC 19707 / BCRC 17464 / JCM 30415 / NCIMB 11848 / C-107</strain>
    </source>
</reference>
<accession>Q3JCB2</accession>
<evidence type="ECO:0000250" key="1"/>
<evidence type="ECO:0000255" key="2">
    <source>
        <dbReference type="HAMAP-Rule" id="MF_01057"/>
    </source>
</evidence>
<comment type="function">
    <text evidence="2">Catalyzes the formation of N(7)-methylguanine at position 46 (m7G46) in tRNA.</text>
</comment>
<comment type="catalytic activity">
    <reaction evidence="2">
        <text>guanosine(46) in tRNA + S-adenosyl-L-methionine = N(7)-methylguanosine(46) in tRNA + S-adenosyl-L-homocysteine</text>
        <dbReference type="Rhea" id="RHEA:42708"/>
        <dbReference type="Rhea" id="RHEA-COMP:10188"/>
        <dbReference type="Rhea" id="RHEA-COMP:10189"/>
        <dbReference type="ChEBI" id="CHEBI:57856"/>
        <dbReference type="ChEBI" id="CHEBI:59789"/>
        <dbReference type="ChEBI" id="CHEBI:74269"/>
        <dbReference type="ChEBI" id="CHEBI:74480"/>
        <dbReference type="EC" id="2.1.1.33"/>
    </reaction>
</comment>
<comment type="pathway">
    <text evidence="2">tRNA modification; N(7)-methylguanine-tRNA biosynthesis.</text>
</comment>
<comment type="similarity">
    <text evidence="2">Belongs to the class I-like SAM-binding methyltransferase superfamily. TrmB family.</text>
</comment>
<proteinExistence type="inferred from homology"/>
<keyword id="KW-0489">Methyltransferase</keyword>
<keyword id="KW-1185">Reference proteome</keyword>
<keyword id="KW-0949">S-adenosyl-L-methionine</keyword>
<keyword id="KW-0808">Transferase</keyword>
<keyword id="KW-0819">tRNA processing</keyword>
<dbReference type="EC" id="2.1.1.33" evidence="2"/>
<dbReference type="EMBL" id="CP000127">
    <property type="protein sequence ID" value="ABA57534.1"/>
    <property type="molecule type" value="Genomic_DNA"/>
</dbReference>
<dbReference type="RefSeq" id="WP_002809644.1">
    <property type="nucleotide sequence ID" value="NC_007484.1"/>
</dbReference>
<dbReference type="SMR" id="Q3JCB2"/>
<dbReference type="FunCoup" id="Q3JCB2">
    <property type="interactions" value="336"/>
</dbReference>
<dbReference type="STRING" id="323261.Noc_1026"/>
<dbReference type="KEGG" id="noc:Noc_1026"/>
<dbReference type="eggNOG" id="COG0220">
    <property type="taxonomic scope" value="Bacteria"/>
</dbReference>
<dbReference type="HOGENOM" id="CLU_050910_0_1_6"/>
<dbReference type="InParanoid" id="Q3JCB2"/>
<dbReference type="UniPathway" id="UPA00989"/>
<dbReference type="Proteomes" id="UP000006838">
    <property type="component" value="Chromosome"/>
</dbReference>
<dbReference type="GO" id="GO:0043527">
    <property type="term" value="C:tRNA methyltransferase complex"/>
    <property type="evidence" value="ECO:0007669"/>
    <property type="project" value="TreeGrafter"/>
</dbReference>
<dbReference type="GO" id="GO:0008176">
    <property type="term" value="F:tRNA (guanine(46)-N7)-methyltransferase activity"/>
    <property type="evidence" value="ECO:0007669"/>
    <property type="project" value="UniProtKB-UniRule"/>
</dbReference>
<dbReference type="CDD" id="cd02440">
    <property type="entry name" value="AdoMet_MTases"/>
    <property type="match status" value="1"/>
</dbReference>
<dbReference type="Gene3D" id="3.40.50.150">
    <property type="entry name" value="Vaccinia Virus protein VP39"/>
    <property type="match status" value="1"/>
</dbReference>
<dbReference type="HAMAP" id="MF_01057">
    <property type="entry name" value="tRNA_methyltr_TrmB"/>
    <property type="match status" value="1"/>
</dbReference>
<dbReference type="InterPro" id="IPR029063">
    <property type="entry name" value="SAM-dependent_MTases_sf"/>
</dbReference>
<dbReference type="InterPro" id="IPR003358">
    <property type="entry name" value="tRNA_(Gua-N-7)_MeTrfase_Trmb"/>
</dbReference>
<dbReference type="InterPro" id="IPR055361">
    <property type="entry name" value="tRNA_methyltr_TrmB_bact"/>
</dbReference>
<dbReference type="NCBIfam" id="TIGR00091">
    <property type="entry name" value="tRNA (guanosine(46)-N7)-methyltransferase TrmB"/>
    <property type="match status" value="1"/>
</dbReference>
<dbReference type="PANTHER" id="PTHR23417">
    <property type="entry name" value="3-DEOXY-D-MANNO-OCTULOSONIC-ACID TRANSFERASE/TRNA GUANINE-N 7 - -METHYLTRANSFERASE"/>
    <property type="match status" value="1"/>
</dbReference>
<dbReference type="PANTHER" id="PTHR23417:SF14">
    <property type="entry name" value="PENTACOTRIPEPTIDE-REPEAT REGION OF PRORP DOMAIN-CONTAINING PROTEIN"/>
    <property type="match status" value="1"/>
</dbReference>
<dbReference type="Pfam" id="PF02390">
    <property type="entry name" value="Methyltransf_4"/>
    <property type="match status" value="1"/>
</dbReference>
<dbReference type="SUPFAM" id="SSF53335">
    <property type="entry name" value="S-adenosyl-L-methionine-dependent methyltransferases"/>
    <property type="match status" value="1"/>
</dbReference>
<dbReference type="PROSITE" id="PS51625">
    <property type="entry name" value="SAM_MT_TRMB"/>
    <property type="match status" value="1"/>
</dbReference>
<protein>
    <recommendedName>
        <fullName evidence="2">tRNA (guanine-N(7)-)-methyltransferase</fullName>
        <ecNumber evidence="2">2.1.1.33</ecNumber>
    </recommendedName>
    <alternativeName>
        <fullName evidence="2">tRNA (guanine(46)-N(7))-methyltransferase</fullName>
    </alternativeName>
    <alternativeName>
        <fullName evidence="2">tRNA(m7G46)-methyltransferase</fullName>
    </alternativeName>
</protein>
<feature type="chain" id="PRO_0000229179" description="tRNA (guanine-N(7)-)-methyltransferase">
    <location>
        <begin position="1"/>
        <end position="236"/>
    </location>
</feature>
<feature type="active site" evidence="1">
    <location>
        <position position="143"/>
    </location>
</feature>
<feature type="binding site" evidence="2">
    <location>
        <position position="68"/>
    </location>
    <ligand>
        <name>S-adenosyl-L-methionine</name>
        <dbReference type="ChEBI" id="CHEBI:59789"/>
    </ligand>
</feature>
<feature type="binding site" evidence="2">
    <location>
        <position position="93"/>
    </location>
    <ligand>
        <name>S-adenosyl-L-methionine</name>
        <dbReference type="ChEBI" id="CHEBI:59789"/>
    </ligand>
</feature>
<feature type="binding site" evidence="2">
    <location>
        <position position="120"/>
    </location>
    <ligand>
        <name>S-adenosyl-L-methionine</name>
        <dbReference type="ChEBI" id="CHEBI:59789"/>
    </ligand>
</feature>
<feature type="binding site" evidence="2">
    <location>
        <position position="143"/>
    </location>
    <ligand>
        <name>S-adenosyl-L-methionine</name>
        <dbReference type="ChEBI" id="CHEBI:59789"/>
    </ligand>
</feature>
<feature type="binding site" evidence="2">
    <location>
        <position position="147"/>
    </location>
    <ligand>
        <name>substrate</name>
    </ligand>
</feature>
<feature type="binding site" evidence="2">
    <location>
        <position position="179"/>
    </location>
    <ligand>
        <name>substrate</name>
    </ligand>
</feature>
<feature type="binding site" evidence="2">
    <location>
        <begin position="212"/>
        <end position="215"/>
    </location>
    <ligand>
        <name>substrate</name>
    </ligand>
</feature>
<organism>
    <name type="scientific">Nitrosococcus oceani (strain ATCC 19707 / BCRC 17464 / JCM 30415 / NCIMB 11848 / C-107)</name>
    <dbReference type="NCBI Taxonomy" id="323261"/>
    <lineage>
        <taxon>Bacteria</taxon>
        <taxon>Pseudomonadati</taxon>
        <taxon>Pseudomonadota</taxon>
        <taxon>Gammaproteobacteria</taxon>
        <taxon>Chromatiales</taxon>
        <taxon>Chromatiaceae</taxon>
        <taxon>Nitrosococcus</taxon>
    </lineage>
</organism>
<name>TRMB_NITOC</name>